<dbReference type="EMBL" id="BC021765">
    <property type="protein sequence ID" value="AAH21765.1"/>
    <property type="molecule type" value="mRNA"/>
</dbReference>
<dbReference type="EMBL" id="BC023806">
    <property type="protein sequence ID" value="AAH23806.1"/>
    <property type="molecule type" value="mRNA"/>
</dbReference>
<dbReference type="EMBL" id="BC025648">
    <property type="protein sequence ID" value="AAH25648.1"/>
    <property type="molecule type" value="mRNA"/>
</dbReference>
<dbReference type="EMBL" id="BC027779">
    <property type="protein sequence ID" value="AAH27779.1"/>
    <property type="molecule type" value="mRNA"/>
</dbReference>
<dbReference type="EMBL" id="BC027788">
    <property type="protein sequence ID" value="AAH27788.1"/>
    <property type="molecule type" value="mRNA"/>
</dbReference>
<dbReference type="EMBL" id="BC035301">
    <property type="protein sequence ID" value="AAH35301.1"/>
    <property type="molecule type" value="mRNA"/>
</dbReference>
<dbReference type="CCDS" id="CCDS15189.1"/>
<dbReference type="RefSeq" id="NP_001288293.1">
    <property type="nucleotide sequence ID" value="NM_001301364.2"/>
</dbReference>
<dbReference type="RefSeq" id="NP_001344485.1">
    <property type="nucleotide sequence ID" value="NM_001357556.2"/>
</dbReference>
<dbReference type="RefSeq" id="NP_001419778.1">
    <property type="nucleotide sequence ID" value="NM_001432849.1"/>
</dbReference>
<dbReference type="RefSeq" id="NP_001419779.1">
    <property type="nucleotide sequence ID" value="NM_001432850.1"/>
</dbReference>
<dbReference type="RefSeq" id="NP_001419780.1">
    <property type="nucleotide sequence ID" value="NM_001432851.1"/>
</dbReference>
<dbReference type="RefSeq" id="NP_598569.1">
    <property type="nucleotide sequence ID" value="NM_133808.6"/>
</dbReference>
<dbReference type="RefSeq" id="XP_006529137.1">
    <property type="nucleotide sequence ID" value="XM_006529074.2"/>
</dbReference>
<dbReference type="RefSeq" id="XP_006529138.1">
    <property type="nucleotide sequence ID" value="XM_006529075.2"/>
</dbReference>
<dbReference type="RefSeq" id="XP_006529139.1">
    <property type="nucleotide sequence ID" value="XM_006529076.2"/>
</dbReference>
<dbReference type="RefSeq" id="XP_006529140.1">
    <property type="nucleotide sequence ID" value="XM_006529077.3"/>
</dbReference>
<dbReference type="RefSeq" id="XP_030097876.1">
    <property type="nucleotide sequence ID" value="XM_030242016.2"/>
</dbReference>
<dbReference type="SMR" id="Q8VDJ3"/>
<dbReference type="BioGRID" id="225750">
    <property type="interactions" value="27"/>
</dbReference>
<dbReference type="FunCoup" id="Q8VDJ3">
    <property type="interactions" value="2661"/>
</dbReference>
<dbReference type="IntAct" id="Q8VDJ3">
    <property type="interactions" value="4"/>
</dbReference>
<dbReference type="MINT" id="Q8VDJ3"/>
<dbReference type="STRING" id="10090.ENSMUSP00000127903"/>
<dbReference type="GlyGen" id="Q8VDJ3">
    <property type="glycosylation" value="3 sites, 2 N-linked glycans (2 sites), 1 O-linked glycan (1 site)"/>
</dbReference>
<dbReference type="iPTMnet" id="Q8VDJ3"/>
<dbReference type="MetOSite" id="Q8VDJ3"/>
<dbReference type="PhosphoSitePlus" id="Q8VDJ3"/>
<dbReference type="SwissPalm" id="Q8VDJ3"/>
<dbReference type="jPOST" id="Q8VDJ3"/>
<dbReference type="PaxDb" id="10090-ENSMUSP00000127903"/>
<dbReference type="ProteomicsDB" id="297574"/>
<dbReference type="Pumba" id="Q8VDJ3"/>
<dbReference type="Antibodypedia" id="1371">
    <property type="antibodies" value="326 antibodies from 30 providers"/>
</dbReference>
<dbReference type="DNASU" id="110611"/>
<dbReference type="Ensembl" id="ENSMUST00000042498.14">
    <property type="protein sequence ID" value="ENSMUSP00000043047.8"/>
    <property type="gene ID" value="ENSMUSG00000034088.16"/>
</dbReference>
<dbReference type="Ensembl" id="ENSMUST00000170883.8">
    <property type="protein sequence ID" value="ENSMUSP00000127903.2"/>
    <property type="gene ID" value="ENSMUSG00000034088.16"/>
</dbReference>
<dbReference type="GeneID" id="110611"/>
<dbReference type="KEGG" id="mmu:110611"/>
<dbReference type="UCSC" id="uc007cdx.2">
    <property type="organism name" value="mouse"/>
</dbReference>
<dbReference type="AGR" id="MGI:99256"/>
<dbReference type="CTD" id="3069"/>
<dbReference type="MGI" id="MGI:99256">
    <property type="gene designation" value="Hdlbp"/>
</dbReference>
<dbReference type="VEuPathDB" id="HostDB:ENSMUSG00000034088"/>
<dbReference type="eggNOG" id="KOG2208">
    <property type="taxonomic scope" value="Eukaryota"/>
</dbReference>
<dbReference type="GeneTree" id="ENSGT00900000141059"/>
<dbReference type="HOGENOM" id="CLU_008532_0_0_1"/>
<dbReference type="InParanoid" id="Q8VDJ3"/>
<dbReference type="OMA" id="DHAGQQV"/>
<dbReference type="OrthoDB" id="10027144at2759"/>
<dbReference type="PhylomeDB" id="Q8VDJ3"/>
<dbReference type="TreeFam" id="TF323767"/>
<dbReference type="Reactome" id="R-MMU-8964011">
    <property type="pathway name" value="HDL clearance"/>
</dbReference>
<dbReference type="BioGRID-ORCS" id="110611">
    <property type="hits" value="6 hits in 81 CRISPR screens"/>
</dbReference>
<dbReference type="CD-CODE" id="CE726F99">
    <property type="entry name" value="Postsynaptic density"/>
</dbReference>
<dbReference type="ChiTaRS" id="Hdlbp">
    <property type="organism name" value="mouse"/>
</dbReference>
<dbReference type="PRO" id="PR:Q8VDJ3"/>
<dbReference type="Proteomes" id="UP000000589">
    <property type="component" value="Chromosome 1"/>
</dbReference>
<dbReference type="RNAct" id="Q8VDJ3">
    <property type="molecule type" value="protein"/>
</dbReference>
<dbReference type="Bgee" id="ENSMUSG00000034088">
    <property type="expression patterns" value="Expressed in embryonic post-anal tail and 265 other cell types or tissues"/>
</dbReference>
<dbReference type="ExpressionAtlas" id="Q8VDJ3">
    <property type="expression patterns" value="baseline and differential"/>
</dbReference>
<dbReference type="GO" id="GO:0005737">
    <property type="term" value="C:cytoplasm"/>
    <property type="evidence" value="ECO:0007669"/>
    <property type="project" value="UniProtKB-SubCell"/>
</dbReference>
<dbReference type="GO" id="GO:0034364">
    <property type="term" value="C:high-density lipoprotein particle"/>
    <property type="evidence" value="ECO:0007669"/>
    <property type="project" value="UniProtKB-KW"/>
</dbReference>
<dbReference type="GO" id="GO:0005634">
    <property type="term" value="C:nucleus"/>
    <property type="evidence" value="ECO:0007669"/>
    <property type="project" value="UniProtKB-SubCell"/>
</dbReference>
<dbReference type="GO" id="GO:0003723">
    <property type="term" value="F:RNA binding"/>
    <property type="evidence" value="ECO:0007669"/>
    <property type="project" value="UniProtKB-KW"/>
</dbReference>
<dbReference type="GO" id="GO:0008203">
    <property type="term" value="P:cholesterol metabolic process"/>
    <property type="evidence" value="ECO:0007669"/>
    <property type="project" value="UniProtKB-KW"/>
</dbReference>
<dbReference type="GO" id="GO:0006869">
    <property type="term" value="P:lipid transport"/>
    <property type="evidence" value="ECO:0007669"/>
    <property type="project" value="UniProtKB-KW"/>
</dbReference>
<dbReference type="CDD" id="cd22405">
    <property type="entry name" value="KH-I_Vigilin_rpt1"/>
    <property type="match status" value="1"/>
</dbReference>
<dbReference type="CDD" id="cd22413">
    <property type="entry name" value="KH-I_Vigilin_rpt10"/>
    <property type="match status" value="1"/>
</dbReference>
<dbReference type="CDD" id="cd22414">
    <property type="entry name" value="KH-I_Vigilin_rpt11"/>
    <property type="match status" value="1"/>
</dbReference>
<dbReference type="CDD" id="cd22415">
    <property type="entry name" value="KH-I_Vigilin_rpt12"/>
    <property type="match status" value="1"/>
</dbReference>
<dbReference type="CDD" id="cd22416">
    <property type="entry name" value="KH-I_Vigilin_rpt13"/>
    <property type="match status" value="1"/>
</dbReference>
<dbReference type="CDD" id="cd22417">
    <property type="entry name" value="KH-I_Vigilin_rpt14"/>
    <property type="match status" value="1"/>
</dbReference>
<dbReference type="CDD" id="cd22418">
    <property type="entry name" value="KH-I_Vigilin_rpt15"/>
    <property type="match status" value="1"/>
</dbReference>
<dbReference type="CDD" id="cd22406">
    <property type="entry name" value="KH-I_Vigilin_rpt2"/>
    <property type="match status" value="1"/>
</dbReference>
<dbReference type="CDD" id="cd22407">
    <property type="entry name" value="KH-I_Vigilin_rpt3"/>
    <property type="match status" value="1"/>
</dbReference>
<dbReference type="CDD" id="cd22408">
    <property type="entry name" value="KH-I_Vigilin_rpt4"/>
    <property type="match status" value="1"/>
</dbReference>
<dbReference type="CDD" id="cd22409">
    <property type="entry name" value="KH-I_Vigilin_rpt5"/>
    <property type="match status" value="1"/>
</dbReference>
<dbReference type="CDD" id="cd02394">
    <property type="entry name" value="KH-I_Vigilin_rpt6"/>
    <property type="match status" value="1"/>
</dbReference>
<dbReference type="CDD" id="cd22410">
    <property type="entry name" value="KH-I_Vigilin_rpt7"/>
    <property type="match status" value="1"/>
</dbReference>
<dbReference type="CDD" id="cd22411">
    <property type="entry name" value="KH-I_Vigilin_rpt8"/>
    <property type="match status" value="1"/>
</dbReference>
<dbReference type="CDD" id="cd22412">
    <property type="entry name" value="KH-I_Vigilin_rpt9"/>
    <property type="match status" value="1"/>
</dbReference>
<dbReference type="FunFam" id="3.30.1370.10:FF:000046">
    <property type="entry name" value="High density lipoprotein binding protein"/>
    <property type="match status" value="1"/>
</dbReference>
<dbReference type="FunFam" id="3.30.1370.10:FF:000057">
    <property type="entry name" value="High density lipoprotein binding protein"/>
    <property type="match status" value="1"/>
</dbReference>
<dbReference type="FunFam" id="3.30.1370.10:FF:000061">
    <property type="entry name" value="High density lipoprotein binding protein"/>
    <property type="match status" value="1"/>
</dbReference>
<dbReference type="FunFam" id="3.30.1370.10:FF:000067">
    <property type="entry name" value="High density lipoprotein binding protein"/>
    <property type="match status" value="1"/>
</dbReference>
<dbReference type="FunFam" id="3.30.1370.10:FF:000042">
    <property type="entry name" value="Vigilin isoform X1"/>
    <property type="match status" value="1"/>
</dbReference>
<dbReference type="FunFam" id="3.30.1370.10:FF:000018">
    <property type="entry name" value="vigilin isoform X1"/>
    <property type="match status" value="3"/>
</dbReference>
<dbReference type="FunFam" id="3.30.1370.10:FF:000033">
    <property type="entry name" value="vigilin isoform X1"/>
    <property type="match status" value="1"/>
</dbReference>
<dbReference type="FunFam" id="3.30.1370.10:FF:000039">
    <property type="entry name" value="vigilin isoform X1"/>
    <property type="match status" value="1"/>
</dbReference>
<dbReference type="FunFam" id="3.30.1370.10:FF:000041">
    <property type="entry name" value="vigilin isoform X1"/>
    <property type="match status" value="1"/>
</dbReference>
<dbReference type="FunFam" id="3.30.1370.10:FF:000050">
    <property type="entry name" value="vigilin isoform X1"/>
    <property type="match status" value="1"/>
</dbReference>
<dbReference type="FunFam" id="3.30.1370.10:FF:000062">
    <property type="entry name" value="vigilin isoform X1"/>
    <property type="match status" value="1"/>
</dbReference>
<dbReference type="Gene3D" id="3.30.1370.10">
    <property type="entry name" value="K Homology domain, type 1"/>
    <property type="match status" value="13"/>
</dbReference>
<dbReference type="InterPro" id="IPR004087">
    <property type="entry name" value="KH_dom"/>
</dbReference>
<dbReference type="InterPro" id="IPR004088">
    <property type="entry name" value="KH_dom_type_1"/>
</dbReference>
<dbReference type="InterPro" id="IPR036612">
    <property type="entry name" value="KH_dom_type_1_sf"/>
</dbReference>
<dbReference type="PANTHER" id="PTHR10627">
    <property type="entry name" value="SCP160"/>
    <property type="match status" value="1"/>
</dbReference>
<dbReference type="PANTHER" id="PTHR10627:SF34">
    <property type="entry name" value="VIGILIN"/>
    <property type="match status" value="1"/>
</dbReference>
<dbReference type="Pfam" id="PF00013">
    <property type="entry name" value="KH_1"/>
    <property type="match status" value="14"/>
</dbReference>
<dbReference type="Pfam" id="PF24668">
    <property type="entry name" value="KH_Vigilin"/>
    <property type="match status" value="1"/>
</dbReference>
<dbReference type="SMART" id="SM00322">
    <property type="entry name" value="KH"/>
    <property type="match status" value="14"/>
</dbReference>
<dbReference type="SUPFAM" id="SSF54791">
    <property type="entry name" value="Eukaryotic type KH-domain (KH-domain type I)"/>
    <property type="match status" value="14"/>
</dbReference>
<dbReference type="PROSITE" id="PS50084">
    <property type="entry name" value="KH_TYPE_1"/>
    <property type="match status" value="14"/>
</dbReference>
<accession>Q8VDJ3</accession>
<feature type="initiator methionine" description="Removed" evidence="2">
    <location>
        <position position="1"/>
    </location>
</feature>
<feature type="chain" id="PRO_0000050132" description="Vigilin">
    <location>
        <begin position="2"/>
        <end position="1268"/>
    </location>
</feature>
<feature type="domain" description="KH 1" evidence="5">
    <location>
        <begin position="150"/>
        <end position="212"/>
    </location>
</feature>
<feature type="domain" description="KH 2" evidence="5">
    <location>
        <begin position="222"/>
        <end position="284"/>
    </location>
</feature>
<feature type="domain" description="KH 3" evidence="5">
    <location>
        <begin position="295"/>
        <end position="357"/>
    </location>
</feature>
<feature type="domain" description="KH 4" evidence="5">
    <location>
        <begin position="364"/>
        <end position="424"/>
    </location>
</feature>
<feature type="domain" description="KH 5" evidence="5">
    <location>
        <begin position="435"/>
        <end position="497"/>
    </location>
</feature>
<feature type="domain" description="KH 6" evidence="5">
    <location>
        <begin position="507"/>
        <end position="570"/>
    </location>
</feature>
<feature type="domain" description="KH 7" evidence="5">
    <location>
        <begin position="581"/>
        <end position="643"/>
    </location>
</feature>
<feature type="domain" description="KH 8" evidence="5">
    <location>
        <begin position="653"/>
        <end position="716"/>
    </location>
</feature>
<feature type="domain" description="KH 9" evidence="5">
    <location>
        <begin position="727"/>
        <end position="790"/>
    </location>
</feature>
<feature type="domain" description="KH 10" evidence="5">
    <location>
        <begin position="800"/>
        <end position="863"/>
    </location>
</feature>
<feature type="domain" description="KH 11" evidence="5">
    <location>
        <begin position="873"/>
        <end position="967"/>
    </location>
</feature>
<feature type="domain" description="KH 12" evidence="5">
    <location>
        <begin position="972"/>
        <end position="1034"/>
    </location>
</feature>
<feature type="domain" description="KH 13" evidence="5">
    <location>
        <begin position="1052"/>
        <end position="1117"/>
    </location>
</feature>
<feature type="domain" description="KH 14" evidence="5">
    <location>
        <begin position="1127"/>
        <end position="1190"/>
    </location>
</feature>
<feature type="region of interest" description="Disordered" evidence="6">
    <location>
        <begin position="910"/>
        <end position="947"/>
    </location>
</feature>
<feature type="region of interest" description="Disordered" evidence="6">
    <location>
        <begin position="1213"/>
        <end position="1268"/>
    </location>
</feature>
<feature type="compositionally biased region" description="Basic and acidic residues" evidence="6">
    <location>
        <begin position="932"/>
        <end position="947"/>
    </location>
</feature>
<feature type="compositionally biased region" description="Polar residues" evidence="6">
    <location>
        <begin position="1233"/>
        <end position="1249"/>
    </location>
</feature>
<feature type="modified residue" description="N-acetylserine" evidence="2">
    <location>
        <position position="2"/>
    </location>
</feature>
<feature type="modified residue" description="Phosphothreonine" evidence="2">
    <location>
        <position position="8"/>
    </location>
</feature>
<feature type="modified residue" description="Phosphoserine" evidence="2">
    <location>
        <position position="11"/>
    </location>
</feature>
<feature type="modified residue" description="Phosphoserine" evidence="7 8 9">
    <location>
        <position position="31"/>
    </location>
</feature>
<feature type="modified residue" description="Phosphothreonine" evidence="4">
    <location>
        <position position="295"/>
    </location>
</feature>
<feature type="modified residue" description="Phosphothreonine" evidence="4">
    <location>
        <position position="296"/>
    </location>
</feature>
<feature type="modified residue" description="Phosphoserine" evidence="2">
    <location>
        <position position="317"/>
    </location>
</feature>
<feature type="modified residue" description="Phosphotyrosine" evidence="2">
    <location>
        <position position="437"/>
    </location>
</feature>
<feature type="modified residue" description="Phosphoserine" evidence="3">
    <location>
        <position position="645"/>
    </location>
</feature>
<feature type="modified residue" description="N6-acetyllysine" evidence="10">
    <location>
        <position position="991"/>
    </location>
</feature>
<feature type="modified residue" description="Phosphoserine" evidence="2">
    <location>
        <position position="1247"/>
    </location>
</feature>
<feature type="modified residue" description="Phosphoserine" evidence="9">
    <location>
        <position position="1252"/>
    </location>
</feature>
<name>VIGLN_MOUSE</name>
<protein>
    <recommendedName>
        <fullName>Vigilin</fullName>
    </recommendedName>
    <alternativeName>
        <fullName>High density lipoprotein-binding protein</fullName>
        <shortName>HDL-binding protein</shortName>
    </alternativeName>
</protein>
<reference key="1">
    <citation type="journal article" date="2004" name="Genome Res.">
        <title>The status, quality, and expansion of the NIH full-length cDNA project: the Mammalian Gene Collection (MGC).</title>
        <authorList>
            <consortium name="The MGC Project Team"/>
        </authorList>
    </citation>
    <scope>NUCLEOTIDE SEQUENCE [LARGE SCALE MRNA]</scope>
    <source>
        <strain>FVB/N</strain>
    </source>
</reference>
<reference key="2">
    <citation type="journal article" date="2006" name="Mol. Cell. Proteomics">
        <title>Comprehensive identification of phosphorylation sites in postsynaptic density preparations.</title>
        <authorList>
            <person name="Trinidad J.C."/>
            <person name="Specht C.G."/>
            <person name="Thalhammer A."/>
            <person name="Schoepfer R."/>
            <person name="Burlingame A.L."/>
        </authorList>
    </citation>
    <scope>IDENTIFICATION BY MASS SPECTROMETRY [LARGE SCALE ANALYSIS]</scope>
    <source>
        <tissue>Brain</tissue>
    </source>
</reference>
<reference key="3">
    <citation type="journal article" date="2007" name="Proc. Natl. Acad. Sci. U.S.A.">
        <title>Large-scale phosphorylation analysis of mouse liver.</title>
        <authorList>
            <person name="Villen J."/>
            <person name="Beausoleil S.A."/>
            <person name="Gerber S.A."/>
            <person name="Gygi S.P."/>
        </authorList>
    </citation>
    <scope>PHOSPHORYLATION [LARGE SCALE ANALYSIS] AT SER-31</scope>
    <scope>IDENTIFICATION BY MASS SPECTROMETRY [LARGE SCALE ANALYSIS]</scope>
    <source>
        <tissue>Liver</tissue>
    </source>
</reference>
<reference key="4">
    <citation type="journal article" date="2008" name="J. Proteome Res.">
        <title>Specific phosphopeptide enrichment with immobilized titanium ion affinity chromatography adsorbent for phosphoproteome analysis.</title>
        <authorList>
            <person name="Zhou H."/>
            <person name="Ye M."/>
            <person name="Dong J."/>
            <person name="Han G."/>
            <person name="Jiang X."/>
            <person name="Wu R."/>
            <person name="Zou H."/>
        </authorList>
    </citation>
    <scope>PHOSPHORYLATION [LARGE SCALE ANALYSIS] AT SER-31</scope>
    <scope>IDENTIFICATION BY MASS SPECTROMETRY [LARGE SCALE ANALYSIS]</scope>
    <source>
        <tissue>Liver</tissue>
    </source>
</reference>
<reference key="5">
    <citation type="journal article" date="2010" name="Cell">
        <title>A tissue-specific atlas of mouse protein phosphorylation and expression.</title>
        <authorList>
            <person name="Huttlin E.L."/>
            <person name="Jedrychowski M.P."/>
            <person name="Elias J.E."/>
            <person name="Goswami T."/>
            <person name="Rad R."/>
            <person name="Beausoleil S.A."/>
            <person name="Villen J."/>
            <person name="Haas W."/>
            <person name="Sowa M.E."/>
            <person name="Gygi S.P."/>
        </authorList>
    </citation>
    <scope>PHOSPHORYLATION [LARGE SCALE ANALYSIS] AT SER-31 AND SER-1252</scope>
    <scope>IDENTIFICATION BY MASS SPECTROMETRY [LARGE SCALE ANALYSIS]</scope>
    <source>
        <tissue>Brain</tissue>
        <tissue>Brown adipose tissue</tissue>
        <tissue>Heart</tissue>
        <tissue>Kidney</tissue>
        <tissue>Liver</tissue>
        <tissue>Lung</tissue>
        <tissue>Pancreas</tissue>
        <tissue>Spleen</tissue>
        <tissue>Testis</tissue>
    </source>
</reference>
<reference key="6">
    <citation type="journal article" date="2013" name="Mol. Cell">
        <title>SIRT5-mediated lysine desuccinylation impacts diverse metabolic pathways.</title>
        <authorList>
            <person name="Park J."/>
            <person name="Chen Y."/>
            <person name="Tishkoff D.X."/>
            <person name="Peng C."/>
            <person name="Tan M."/>
            <person name="Dai L."/>
            <person name="Xie Z."/>
            <person name="Zhang Y."/>
            <person name="Zwaans B.M."/>
            <person name="Skinner M.E."/>
            <person name="Lombard D.B."/>
            <person name="Zhao Y."/>
        </authorList>
    </citation>
    <scope>ACETYLATION [LARGE SCALE ANALYSIS] AT LYS-991</scope>
    <scope>IDENTIFICATION BY MASS SPECTROMETRY [LARGE SCALE ANALYSIS]</scope>
    <source>
        <tissue>Embryonic fibroblast</tissue>
    </source>
</reference>
<gene>
    <name type="primary">Hdlbp</name>
</gene>
<evidence type="ECO:0000250" key="1"/>
<evidence type="ECO:0000250" key="2">
    <source>
        <dbReference type="UniProtKB" id="Q00341"/>
    </source>
</evidence>
<evidence type="ECO:0000250" key="3">
    <source>
        <dbReference type="UniProtKB" id="Q9Z1A6"/>
    </source>
</evidence>
<evidence type="ECO:0000255" key="4"/>
<evidence type="ECO:0000255" key="5">
    <source>
        <dbReference type="PROSITE-ProRule" id="PRU00117"/>
    </source>
</evidence>
<evidence type="ECO:0000256" key="6">
    <source>
        <dbReference type="SAM" id="MobiDB-lite"/>
    </source>
</evidence>
<evidence type="ECO:0007744" key="7">
    <source>
    </source>
</evidence>
<evidence type="ECO:0007744" key="8">
    <source>
    </source>
</evidence>
<evidence type="ECO:0007744" key="9">
    <source>
    </source>
</evidence>
<evidence type="ECO:0007744" key="10">
    <source>
    </source>
</evidence>
<organism>
    <name type="scientific">Mus musculus</name>
    <name type="common">Mouse</name>
    <dbReference type="NCBI Taxonomy" id="10090"/>
    <lineage>
        <taxon>Eukaryota</taxon>
        <taxon>Metazoa</taxon>
        <taxon>Chordata</taxon>
        <taxon>Craniata</taxon>
        <taxon>Vertebrata</taxon>
        <taxon>Euteleostomi</taxon>
        <taxon>Mammalia</taxon>
        <taxon>Eutheria</taxon>
        <taxon>Euarchontoglires</taxon>
        <taxon>Glires</taxon>
        <taxon>Rodentia</taxon>
        <taxon>Myomorpha</taxon>
        <taxon>Muroidea</taxon>
        <taxon>Muridae</taxon>
        <taxon>Murinae</taxon>
        <taxon>Mus</taxon>
        <taxon>Mus</taxon>
    </lineage>
</organism>
<sequence>MSSVAVLTQESFAEHRSGLVPQQIKVATLNSEEENDPPTYKDAFPPLPEKAACLESAQEPAGAWSNKIRPIKASVITQVFHVPLEERKYKDMNQFGEGEQAKICLEIMQRTGAHLELSLAKDQGLSIMVSGKLDAVMKARKDIVARLQTQASATVPIPKEHHRFVIGKNGEKLQDLELKTATKIQIPRPDDPSNQIKITGTKEGIEKARHEVLLISAEQDKRAVERLEVEKAFHPFIAGPYNRLVGEIMQETGTRINIPPPSVNRTEIVFTGEKEQLAQAVARIKKIYEEKKKKTTTIAVEVKKSQHKYVIGPKGNSLQEILERTGVSVEIPPSDSISETVILRGEPEKLGQALTEVYAKANSFTVSSVSAPSWLHRFIIGKKGQNLAKITQQMPKVHIEFTEGEDKITLEGPTEDVNVAQEQIEGMVKDLINRMDYVEINIDHKFHRHLIGKSGANINRIKDQYKVSVRIPPDSEKSNLIRIEGDPQGVQQAKRELLELASRMENERTKDLIIEQRFHRTIIGQKGERIREIRDKFPEVIINFPDPAQKSDIVQLRGPKNEVEKCTKYMQKMVADLVENSYSISVPIFKQFHKNIIGKGGANIKKIREESNTKIDLPAENSNSETIIITGKRANCEAARSRILSIQKDLANIAEVEVSIPAKLHNSLIGTKGRLIRSIMEECGGVHIHFPVEGSGSDTVVIRGPSSDVEKAKKQLLHLAEEKQTKSFTVDIRAKPEYHKFLIGKGGGKIRKVRDSTGARIIFPAAEDKDQDLITIIGKEDAVREAQKELEALIQNLENVVEDYMLVDPKHHRHFVIRRGQVLREIAEEYGGVMVSFPRSGTQSDKVTLKGAKDCVEAAKKRIQEIIEDLEAQVTVECAIPQKFHRSVMGPKGSRIQQITRDYNVQIKFPDREENPVHSVEPSIQENGDEAGEGREAKETDPGSPRRCDIIIISGRKEKCEAAKEALEALVPVTIEVEVPFDLHRYIIGQKGSGIRKMMDEFEVNIHVPAPELQSDTIAITGLAANLDRAKAGLLDRVKELQAEQEDRALRSFKLSVTVDPKYHPKIIGRKGAVITQIRLEHEVNIQFPDKDDGNQPQDQITITGYEKNTEAARDAILKIVGELEQMVSEDVPLDHRVHARIIGARGKAIRKIMDEFKVDIRFPQSGAPDPNCVTVTGLPENVEEAIDHILNLEEEYLADVVDSEALQVYMKPPAHEESRAPSKGFVVRDAPWTSNSSEKAPDMSSSEEFPSFGAQVAPKTLPWGPKR</sequence>
<comment type="function">
    <text evidence="1">Appears to play a role in cell sterol metabolism. It may function to protect cells from over-accumulation of cholesterol (By similarity).</text>
</comment>
<comment type="subcellular location">
    <subcellularLocation>
        <location evidence="1">Cytoplasm</location>
    </subcellularLocation>
    <subcellularLocation>
        <location evidence="1">Nucleus</location>
    </subcellularLocation>
</comment>
<proteinExistence type="evidence at protein level"/>
<keyword id="KW-0007">Acetylation</keyword>
<keyword id="KW-0153">Cholesterol metabolism</keyword>
<keyword id="KW-0963">Cytoplasm</keyword>
<keyword id="KW-0345">HDL</keyword>
<keyword id="KW-0443">Lipid metabolism</keyword>
<keyword id="KW-0445">Lipid transport</keyword>
<keyword id="KW-0539">Nucleus</keyword>
<keyword id="KW-0597">Phosphoprotein</keyword>
<keyword id="KW-1185">Reference proteome</keyword>
<keyword id="KW-0677">Repeat</keyword>
<keyword id="KW-0694">RNA-binding</keyword>
<keyword id="KW-0753">Steroid metabolism</keyword>
<keyword id="KW-1207">Sterol metabolism</keyword>
<keyword id="KW-0813">Transport</keyword>